<proteinExistence type="evidence at transcript level"/>
<sequence>MDIDALSLNELKALRSKVDRAIVTYEERKKKEAFAELDEIARKMGYPLAEILTMVETKPRKTVAAKYANPANPSETWTGRGRKPKWVEAALASGKSLEDLTI</sequence>
<feature type="chain" id="PRO_0000168518" description="Trans-acting regulatory protein HvrA">
    <location>
        <begin position="1"/>
        <end position="102"/>
    </location>
</feature>
<feature type="DNA-binding region" evidence="1">
    <location>
        <begin position="80"/>
        <end position="85"/>
    </location>
</feature>
<evidence type="ECO:0000250" key="1">
    <source>
        <dbReference type="UniProtKB" id="P0A1S2"/>
    </source>
</evidence>
<evidence type="ECO:0000250" key="2">
    <source>
        <dbReference type="UniProtKB" id="P0ACF8"/>
    </source>
</evidence>
<evidence type="ECO:0000269" key="3">
    <source>
    </source>
</evidence>
<evidence type="ECO:0000305" key="4"/>
<keyword id="KW-0010">Activator</keyword>
<keyword id="KW-0963">Cytoplasm</keyword>
<keyword id="KW-0238">DNA-binding</keyword>
<keyword id="KW-0804">Transcription</keyword>
<keyword id="KW-0805">Transcription regulation</keyword>
<organism>
    <name type="scientific">Rhodobacter capsulatus</name>
    <name type="common">Rhodopseudomonas capsulata</name>
    <dbReference type="NCBI Taxonomy" id="1061"/>
    <lineage>
        <taxon>Bacteria</taxon>
        <taxon>Pseudomonadati</taxon>
        <taxon>Pseudomonadota</taxon>
        <taxon>Alphaproteobacteria</taxon>
        <taxon>Rhodobacterales</taxon>
        <taxon>Rhodobacter group</taxon>
        <taxon>Rhodobacter</taxon>
    </lineage>
</organism>
<reference key="1">
    <citation type="journal article" date="1994" name="J. Bacteriol.">
        <title>Characterization of a light-responding trans-activator responsible for differentially controlling reaction center and light-harvesting-I gene expression in Rhodobacter capsulatus.</title>
        <authorList>
            <person name="Buggy J.J."/>
            <person name="Sganga M.W."/>
            <person name="Bauer C.E."/>
        </authorList>
    </citation>
    <scope>NUCLEOTIDE SEQUENCE [GENOMIC DNA]</scope>
    <scope>FUNCTION</scope>
    <scope>INDUCTION</scope>
    <scope>DISRUPTION PHENOTYPE</scope>
    <source>
        <strain>ATCC 23782 / St Louis</strain>
    </source>
</reference>
<name>HVRA_RHOCA</name>
<protein>
    <recommendedName>
        <fullName>Trans-acting regulatory protein HvrA</fullName>
    </recommendedName>
</protein>
<dbReference type="EMBL" id="X67236">
    <property type="protein sequence ID" value="CAA47662.1"/>
    <property type="molecule type" value="Genomic_DNA"/>
</dbReference>
<dbReference type="RefSeq" id="WP_013065793.1">
    <property type="nucleotide sequence ID" value="NZ_VIBE01000003.1"/>
</dbReference>
<dbReference type="SMR" id="P42505"/>
<dbReference type="GeneID" id="31489003"/>
<dbReference type="OMA" id="WELWNGR"/>
<dbReference type="GO" id="GO:0005829">
    <property type="term" value="C:cytosol"/>
    <property type="evidence" value="ECO:0007669"/>
    <property type="project" value="TreeGrafter"/>
</dbReference>
<dbReference type="GO" id="GO:0009295">
    <property type="term" value="C:nucleoid"/>
    <property type="evidence" value="ECO:0007669"/>
    <property type="project" value="UniProtKB-SubCell"/>
</dbReference>
<dbReference type="GO" id="GO:0032993">
    <property type="term" value="C:protein-DNA complex"/>
    <property type="evidence" value="ECO:0007669"/>
    <property type="project" value="TreeGrafter"/>
</dbReference>
<dbReference type="GO" id="GO:0003681">
    <property type="term" value="F:bent DNA binding"/>
    <property type="evidence" value="ECO:0007669"/>
    <property type="project" value="TreeGrafter"/>
</dbReference>
<dbReference type="GO" id="GO:0001217">
    <property type="term" value="F:DNA-binding transcription repressor activity"/>
    <property type="evidence" value="ECO:0007669"/>
    <property type="project" value="TreeGrafter"/>
</dbReference>
<dbReference type="GO" id="GO:0003680">
    <property type="term" value="F:minor groove of adenine-thymine-rich DNA binding"/>
    <property type="evidence" value="ECO:0007669"/>
    <property type="project" value="TreeGrafter"/>
</dbReference>
<dbReference type="GO" id="GO:0000976">
    <property type="term" value="F:transcription cis-regulatory region binding"/>
    <property type="evidence" value="ECO:0007669"/>
    <property type="project" value="TreeGrafter"/>
</dbReference>
<dbReference type="Gene3D" id="4.10.430.10">
    <property type="entry name" value="Histone-like protein H-NS, C-terminal domain"/>
    <property type="match status" value="1"/>
</dbReference>
<dbReference type="InterPro" id="IPR027444">
    <property type="entry name" value="H-NS_C_dom"/>
</dbReference>
<dbReference type="InterPro" id="IPR037150">
    <property type="entry name" value="H-NS_C_dom_sf"/>
</dbReference>
<dbReference type="PANTHER" id="PTHR38097">
    <property type="match status" value="1"/>
</dbReference>
<dbReference type="PANTHER" id="PTHR38097:SF2">
    <property type="entry name" value="DNA-BINDING PROTEIN STPA"/>
    <property type="match status" value="1"/>
</dbReference>
<dbReference type="Pfam" id="PF00816">
    <property type="entry name" value="Histone_HNS"/>
    <property type="match status" value="1"/>
</dbReference>
<dbReference type="SMART" id="SM00528">
    <property type="entry name" value="HNS"/>
    <property type="match status" value="1"/>
</dbReference>
<dbReference type="SUPFAM" id="SSF81273">
    <property type="entry name" value="H-NS histone-like proteins"/>
    <property type="match status" value="1"/>
</dbReference>
<comment type="function">
    <text evidence="3">A dim-light trans-acting activator of Puf and Puh expression, that has no effect on the expression of the Puc operon. Responsible for regulating light-harvesting-I and reaction center structural gene expression differentially from that of light-harvesting-II expression in response to alterations in light. Proper light regulation of light-harvesting and reaction center polypeptide synthesis is an important physiological trait that enables cells to adapt to ever-changing environmental conditions of light intensity.</text>
</comment>
<comment type="subunit">
    <text evidence="2">Homodimer that oligomerizes on DNA into higher-order complexes that form bridges between disparate regions of DNA compacting it (By similarity).</text>
</comment>
<comment type="subcellular location">
    <subcellularLocation>
        <location evidence="2">Cytoplasm</location>
        <location evidence="2">Nucleoid</location>
    </subcellularLocation>
</comment>
<comment type="induction">
    <text evidence="3">Expressed in light-grown cells, probably a member of the senC-regA-hvrA operon (PubMed:7961455).</text>
</comment>
<comment type="disruption phenotype">
    <text evidence="3">Grows normally under saturating light (6000 lux), in low light (80 lux) grows poorly, decreased induction of puf and puh but not puc operons nor genes for bacteriochlorophyll biosynthesis (PubMed:7961455).</text>
</comment>
<comment type="similarity">
    <text evidence="4">Belongs to the histone-like protein H-NS family.</text>
</comment>
<gene>
    <name type="primary">hvrA</name>
</gene>
<accession>P42505</accession>